<protein>
    <recommendedName>
        <fullName evidence="4">Type II methyltransferase M1.LlaDCHI</fullName>
        <shortName evidence="4">M1.LlaDCHI</shortName>
        <ecNumber>2.1.1.72</ecNumber>
    </recommendedName>
    <alternativeName>
        <fullName>Adenine-specific methyltransferase LlaDCHIA</fullName>
    </alternativeName>
    <alternativeName>
        <fullName evidence="5">M.LlaIIA</fullName>
    </alternativeName>
    <alternativeName>
        <fullName>Modification methylase LlaDCHIA</fullName>
        <shortName evidence="3">M.LlaDCHIA</shortName>
    </alternativeName>
</protein>
<comment type="function">
    <text evidence="4 7">An alpha subtype methylase, recognizes the double-stranded sequence 5'-GATC-3', methylates A-2 on both strands, and protects the DNA from cleavage by the LlaDCHI endonuclease.</text>
</comment>
<comment type="catalytic activity">
    <reaction>
        <text>a 2'-deoxyadenosine in DNA + S-adenosyl-L-methionine = an N(6)-methyl-2'-deoxyadenosine in DNA + S-adenosyl-L-homocysteine + H(+)</text>
        <dbReference type="Rhea" id="RHEA:15197"/>
        <dbReference type="Rhea" id="RHEA-COMP:12418"/>
        <dbReference type="Rhea" id="RHEA-COMP:12419"/>
        <dbReference type="ChEBI" id="CHEBI:15378"/>
        <dbReference type="ChEBI" id="CHEBI:57856"/>
        <dbReference type="ChEBI" id="CHEBI:59789"/>
        <dbReference type="ChEBI" id="CHEBI:90615"/>
        <dbReference type="ChEBI" id="CHEBI:90616"/>
        <dbReference type="EC" id="2.1.1.72"/>
    </reaction>
</comment>
<comment type="miscellaneous">
    <text evidence="2">The LlaDCHI restriction system has two different methylases.</text>
</comment>
<comment type="miscellaneous">
    <text evidence="7">Genes encoded on plasmid pSQR700 confer strong resistance to the three most common lactococcal phage species (936, c2, and P335). Its presence is probably one reason for the strong bacteriophage resistance shown by strain DCH-4 over the years.</text>
</comment>
<comment type="similarity">
    <text evidence="6">Belongs to the N(4)/N(6)-methyltransferase family.</text>
</comment>
<evidence type="ECO:0000250" key="1"/>
<evidence type="ECO:0000269" key="2">
    <source>
    </source>
</evidence>
<evidence type="ECO:0000303" key="3">
    <source>
    </source>
</evidence>
<evidence type="ECO:0000303" key="4">
    <source>
    </source>
</evidence>
<evidence type="ECO:0000303" key="5">
    <source>
    </source>
</evidence>
<evidence type="ECO:0000305" key="6"/>
<evidence type="ECO:0000305" key="7">
    <source>
    </source>
</evidence>
<reference key="1">
    <citation type="journal article" date="1995" name="Appl. Environ. Microbiol.">
        <title>Cloning and sequencing of LlaDCHI restriction/modification genes from Lactococcus lactis and relatedness of this system to the Streptococcus pneumoniae DpnII system.</title>
        <authorList>
            <person name="Moineau S."/>
            <person name="Walker S.A."/>
            <person name="Vedamuthu E.R."/>
            <person name="Vandenbergh P.A."/>
        </authorList>
    </citation>
    <scope>NUCLEOTIDE SEQUENCE [GENOMIC DNA]</scope>
    <scope>FUNCTION</scope>
    <source>
        <strain>DCH-4</strain>
    </source>
</reference>
<reference key="2">
    <citation type="journal article" date="1995" name="Appl. Environ. Microbiol.">
        <authorList>
            <person name="Moineau S."/>
            <person name="Walker S.A."/>
            <person name="Vedamuthu E.R."/>
            <person name="Vandenbergh P.A."/>
        </authorList>
    </citation>
    <scope>ERRATUM OF PUBMED:7793939</scope>
</reference>
<reference key="3">
    <citation type="journal article" date="2001" name="J. Dairy Sci.">
        <title>DNA sequence analysis of three Lactococcus lactis plasmids encoding phage resistance mechanisms.</title>
        <authorList>
            <person name="Boucher I."/>
            <person name="Emond E."/>
            <person name="Parrot M."/>
            <person name="Moineau S."/>
        </authorList>
    </citation>
    <scope>SEQUENCE REVISION</scope>
</reference>
<reference key="4">
    <citation type="journal article" date="2003" name="Nucleic Acids Res.">
        <title>A nomenclature for restriction enzymes, DNA methyltransferases, homing endonucleases and their genes.</title>
        <authorList>
            <person name="Roberts R.J."/>
            <person name="Belfort M."/>
            <person name="Bestor T."/>
            <person name="Bhagwat A.S."/>
            <person name="Bickle T.A."/>
            <person name="Bitinaite J."/>
            <person name="Blumenthal R.M."/>
            <person name="Degtyarev S.K."/>
            <person name="Dryden D.T."/>
            <person name="Dybvig K."/>
            <person name="Firman K."/>
            <person name="Gromova E.S."/>
            <person name="Gumport R.I."/>
            <person name="Halford S.E."/>
            <person name="Hattman S."/>
            <person name="Heitman J."/>
            <person name="Hornby D.P."/>
            <person name="Janulaitis A."/>
            <person name="Jeltsch A."/>
            <person name="Josephsen J."/>
            <person name="Kiss A."/>
            <person name="Klaenhammer T.R."/>
            <person name="Kobayashi I."/>
            <person name="Kong H."/>
            <person name="Krueger D.H."/>
            <person name="Lacks S."/>
            <person name="Marinus M.G."/>
            <person name="Miyahara M."/>
            <person name="Morgan R.D."/>
            <person name="Murray N.E."/>
            <person name="Nagaraja V."/>
            <person name="Piekarowicz A."/>
            <person name="Pingoud A."/>
            <person name="Raleigh E."/>
            <person name="Rao D.N."/>
            <person name="Reich N."/>
            <person name="Repin V.E."/>
            <person name="Selker E.U."/>
            <person name="Shaw P.C."/>
            <person name="Stein D.C."/>
            <person name="Stoddard B.L."/>
            <person name="Szybalski W."/>
            <person name="Trautner T.A."/>
            <person name="Van Etten J.L."/>
            <person name="Vitor J.M."/>
            <person name="Wilson G.G."/>
            <person name="Xu S.Y."/>
        </authorList>
    </citation>
    <scope>NOMENCLATURE</scope>
    <scope>SUBTYPE</scope>
</reference>
<organism>
    <name type="scientific">Lactococcus lactis subsp. cremoris</name>
    <name type="common">Streptococcus cremoris</name>
    <dbReference type="NCBI Taxonomy" id="1359"/>
    <lineage>
        <taxon>Bacteria</taxon>
        <taxon>Bacillati</taxon>
        <taxon>Bacillota</taxon>
        <taxon>Bacilli</taxon>
        <taxon>Lactobacillales</taxon>
        <taxon>Streptococcaceae</taxon>
        <taxon>Lactococcus</taxon>
    </lineage>
</organism>
<sequence length="284" mass="33078">MNLLQKNKINLRPFTKWTGGKRQLLPHIQYLMPEKYNHFFEPFIGGGALFFELAPQKAVINDFNSELINCYRQMKDNPEQLIELLTNHQRENSKEYYLDLRSSDRDGRIDKMSEVERAARIMYMLRVDFNGLYRVNSKNQFNVPYGRYKNPKIVDKELIESISEYLNNNSIKIMSGDFEKAVKEAQDGDFVYFDPPYIPLSETSAFTSYTHEGFSYEDQVRLRDCFKQLDSKGVFVMLSNSSSPLAEELYKDFNIHKIEATRTNGAKSSSRGKITEIIVTNYGN</sequence>
<feature type="chain" id="PRO_0000087953" description="Type II methyltransferase M1.LlaDCHI">
    <location>
        <begin position="1"/>
        <end position="284"/>
    </location>
</feature>
<feature type="binding site" evidence="1">
    <location>
        <position position="17"/>
    </location>
    <ligand>
        <name>S-adenosyl-L-methionine</name>
        <dbReference type="ChEBI" id="CHEBI:59789"/>
    </ligand>
</feature>
<feature type="binding site" evidence="1">
    <location>
        <position position="21"/>
    </location>
    <ligand>
        <name>S-adenosyl-L-methionine</name>
        <dbReference type="ChEBI" id="CHEBI:59789"/>
    </ligand>
</feature>
<feature type="binding site" evidence="1">
    <location>
        <position position="62"/>
    </location>
    <ligand>
        <name>S-adenosyl-L-methionine</name>
        <dbReference type="ChEBI" id="CHEBI:59789"/>
    </ligand>
</feature>
<feature type="binding site" evidence="1">
    <location>
        <position position="194"/>
    </location>
    <ligand>
        <name>S-adenosyl-L-methionine</name>
        <dbReference type="ChEBI" id="CHEBI:59789"/>
    </ligand>
</feature>
<dbReference type="EC" id="2.1.1.72"/>
<dbReference type="EMBL" id="U16027">
    <property type="protein sequence ID" value="AAK57808.1"/>
    <property type="molecule type" value="Genomic_DNA"/>
</dbReference>
<dbReference type="RefSeq" id="NP_116733.1">
    <property type="nucleotide sequence ID" value="NC_002798.1"/>
</dbReference>
<dbReference type="RefSeq" id="WP_010925605.1">
    <property type="nucleotide sequence ID" value="NZ_VBTA01000012.1"/>
</dbReference>
<dbReference type="SMR" id="P50179"/>
<dbReference type="REBASE" id="249493">
    <property type="entry name" value="M1.WciM2ORF523P"/>
</dbReference>
<dbReference type="REBASE" id="290974">
    <property type="entry name" value="M.Msa27082ORF4226P"/>
</dbReference>
<dbReference type="REBASE" id="3662">
    <property type="entry name" value="M1.LlaDCHI"/>
</dbReference>
<dbReference type="PRO" id="PR:P50179"/>
<dbReference type="GO" id="GO:1904047">
    <property type="term" value="F:S-adenosyl-L-methionine binding"/>
    <property type="evidence" value="ECO:0007669"/>
    <property type="project" value="TreeGrafter"/>
</dbReference>
<dbReference type="GO" id="GO:0043565">
    <property type="term" value="F:sequence-specific DNA binding"/>
    <property type="evidence" value="ECO:0007669"/>
    <property type="project" value="TreeGrafter"/>
</dbReference>
<dbReference type="GO" id="GO:0009007">
    <property type="term" value="F:site-specific DNA-methyltransferase (adenine-specific) activity"/>
    <property type="evidence" value="ECO:0007669"/>
    <property type="project" value="UniProtKB-EC"/>
</dbReference>
<dbReference type="GO" id="GO:0009307">
    <property type="term" value="P:DNA restriction-modification system"/>
    <property type="evidence" value="ECO:0007669"/>
    <property type="project" value="UniProtKB-KW"/>
</dbReference>
<dbReference type="GO" id="GO:0032259">
    <property type="term" value="P:methylation"/>
    <property type="evidence" value="ECO:0007669"/>
    <property type="project" value="UniProtKB-KW"/>
</dbReference>
<dbReference type="GO" id="GO:0006298">
    <property type="term" value="P:mismatch repair"/>
    <property type="evidence" value="ECO:0007669"/>
    <property type="project" value="TreeGrafter"/>
</dbReference>
<dbReference type="Gene3D" id="1.10.1020.10">
    <property type="entry name" value="Adenine-specific Methyltransferase, Domain 2"/>
    <property type="match status" value="1"/>
</dbReference>
<dbReference type="Gene3D" id="3.40.50.150">
    <property type="entry name" value="Vaccinia Virus protein VP39"/>
    <property type="match status" value="1"/>
</dbReference>
<dbReference type="InterPro" id="IPR023095">
    <property type="entry name" value="Ade_MeTrfase_dom_2"/>
</dbReference>
<dbReference type="InterPro" id="IPR002052">
    <property type="entry name" value="DNA_methylase_N6_adenine_CS"/>
</dbReference>
<dbReference type="InterPro" id="IPR012263">
    <property type="entry name" value="M_m6A_EcoRV"/>
</dbReference>
<dbReference type="InterPro" id="IPR012327">
    <property type="entry name" value="MeTrfase_D12"/>
</dbReference>
<dbReference type="InterPro" id="IPR029063">
    <property type="entry name" value="SAM-dependent_MTases_sf"/>
</dbReference>
<dbReference type="NCBIfam" id="TIGR00571">
    <property type="entry name" value="dam"/>
    <property type="match status" value="1"/>
</dbReference>
<dbReference type="PANTHER" id="PTHR30481">
    <property type="entry name" value="DNA ADENINE METHYLASE"/>
    <property type="match status" value="1"/>
</dbReference>
<dbReference type="PANTHER" id="PTHR30481:SF3">
    <property type="entry name" value="DNA ADENINE METHYLASE"/>
    <property type="match status" value="1"/>
</dbReference>
<dbReference type="Pfam" id="PF02086">
    <property type="entry name" value="MethyltransfD12"/>
    <property type="match status" value="1"/>
</dbReference>
<dbReference type="PIRSF" id="PIRSF000398">
    <property type="entry name" value="M_m6A_EcoRV"/>
    <property type="match status" value="1"/>
</dbReference>
<dbReference type="PRINTS" id="PR00505">
    <property type="entry name" value="D12N6MTFRASE"/>
</dbReference>
<dbReference type="SUPFAM" id="SSF53335">
    <property type="entry name" value="S-adenosyl-L-methionine-dependent methyltransferases"/>
    <property type="match status" value="1"/>
</dbReference>
<dbReference type="PROSITE" id="PS00092">
    <property type="entry name" value="N6_MTASE"/>
    <property type="match status" value="1"/>
</dbReference>
<accession>P50179</accession>
<accession>Q93K25</accession>
<geneLocation type="plasmid">
    <name>pSRQ700</name>
</geneLocation>
<proteinExistence type="inferred from homology"/>
<name>MTL21_LACLC</name>
<keyword id="KW-0238">DNA-binding</keyword>
<keyword id="KW-0489">Methyltransferase</keyword>
<keyword id="KW-0614">Plasmid</keyword>
<keyword id="KW-0680">Restriction system</keyword>
<keyword id="KW-0949">S-adenosyl-L-methionine</keyword>
<keyword id="KW-0808">Transferase</keyword>
<gene>
    <name evidence="3" type="primary">llaDCHIA</name>
    <name type="synonym">llaDCHIAM</name>
    <name evidence="5" type="synonym">llaIIA</name>
</gene>